<keyword id="KW-0002">3D-structure</keyword>
<keyword id="KW-0998">Cell outer membrane</keyword>
<keyword id="KW-0133">Cell shape</keyword>
<keyword id="KW-0449">Lipoprotein</keyword>
<keyword id="KW-0472">Membrane</keyword>
<keyword id="KW-0564">Palmitate</keyword>
<keyword id="KW-0573">Peptidoglycan synthesis</keyword>
<keyword id="KW-1185">Reference proteome</keyword>
<keyword id="KW-0732">Signal</keyword>
<organism>
    <name type="scientific">Salmonella typhimurium (strain LT2 / SGSC1412 / ATCC 700720)</name>
    <dbReference type="NCBI Taxonomy" id="99287"/>
    <lineage>
        <taxon>Bacteria</taxon>
        <taxon>Pseudomonadati</taxon>
        <taxon>Pseudomonadota</taxon>
        <taxon>Gammaproteobacteria</taxon>
        <taxon>Enterobacterales</taxon>
        <taxon>Enterobacteriaceae</taxon>
        <taxon>Salmonella</taxon>
    </lineage>
</organism>
<gene>
    <name evidence="1" type="primary">lpoB</name>
    <name type="ordered locus">STM1207</name>
</gene>
<feature type="signal peptide" evidence="1">
    <location>
        <begin position="1"/>
        <end position="19"/>
    </location>
</feature>
<feature type="chain" id="PRO_0000405790" description="Penicillin-binding protein activator LpoB">
    <location>
        <begin position="20"/>
        <end position="212"/>
    </location>
</feature>
<feature type="region of interest" description="Disordered" evidence="2">
    <location>
        <begin position="28"/>
        <end position="73"/>
    </location>
</feature>
<feature type="compositionally biased region" description="Pro residues" evidence="2">
    <location>
        <begin position="36"/>
        <end position="49"/>
    </location>
</feature>
<feature type="lipid moiety-binding region" description="N-palmitoyl cysteine" evidence="1">
    <location>
        <position position="20"/>
    </location>
</feature>
<feature type="lipid moiety-binding region" description="S-diacylglycerol cysteine" evidence="1">
    <location>
        <position position="20"/>
    </location>
</feature>
<feature type="helix" evidence="4">
    <location>
        <begin position="79"/>
        <end position="91"/>
    </location>
</feature>
<feature type="strand" evidence="4">
    <location>
        <begin position="100"/>
        <end position="104"/>
    </location>
</feature>
<feature type="strand" evidence="4">
    <location>
        <begin position="108"/>
        <end position="113"/>
    </location>
</feature>
<feature type="helix" evidence="4">
    <location>
        <begin position="117"/>
        <end position="130"/>
    </location>
</feature>
<feature type="helix" evidence="3">
    <location>
        <begin position="131"/>
        <end position="133"/>
    </location>
</feature>
<feature type="helix" evidence="4">
    <location>
        <begin position="139"/>
        <end position="148"/>
    </location>
</feature>
<feature type="helix" evidence="4">
    <location>
        <begin position="160"/>
        <end position="170"/>
    </location>
</feature>
<feature type="strand" evidence="4">
    <location>
        <begin position="173"/>
        <end position="182"/>
    </location>
</feature>
<feature type="strand" evidence="4">
    <location>
        <begin position="188"/>
        <end position="195"/>
    </location>
</feature>
<feature type="turn" evidence="4">
    <location>
        <begin position="196"/>
        <end position="198"/>
    </location>
</feature>
<feature type="strand" evidence="4">
    <location>
        <begin position="201"/>
        <end position="208"/>
    </location>
</feature>
<comment type="function">
    <text evidence="1">Regulator of peptidoglycan synthesis that is essential for the function of penicillin-binding protein 1B (PBP1b).</text>
</comment>
<comment type="subunit">
    <text evidence="1">Interacts with PBP1b.</text>
</comment>
<comment type="subcellular location">
    <subcellularLocation>
        <location evidence="1">Cell outer membrane</location>
        <topology evidence="1">Lipid-anchor</topology>
        <orientation evidence="1">Periplasmic side</orientation>
    </subcellularLocation>
</comment>
<comment type="similarity">
    <text evidence="1">Belongs to the LpoB family.</text>
</comment>
<accession>Q8ZQ08</accession>
<evidence type="ECO:0000255" key="1">
    <source>
        <dbReference type="HAMAP-Rule" id="MF_01889"/>
    </source>
</evidence>
<evidence type="ECO:0000256" key="2">
    <source>
        <dbReference type="SAM" id="MobiDB-lite"/>
    </source>
</evidence>
<evidence type="ECO:0007829" key="3">
    <source>
        <dbReference type="PDB" id="4Q6L"/>
    </source>
</evidence>
<evidence type="ECO:0007829" key="4">
    <source>
        <dbReference type="PDB" id="4Q6V"/>
    </source>
</evidence>
<proteinExistence type="evidence at protein level"/>
<name>LPOB_SALTY</name>
<reference key="1">
    <citation type="journal article" date="2001" name="Nature">
        <title>Complete genome sequence of Salmonella enterica serovar Typhimurium LT2.</title>
        <authorList>
            <person name="McClelland M."/>
            <person name="Sanderson K.E."/>
            <person name="Spieth J."/>
            <person name="Clifton S.W."/>
            <person name="Latreille P."/>
            <person name="Courtney L."/>
            <person name="Porwollik S."/>
            <person name="Ali J."/>
            <person name="Dante M."/>
            <person name="Du F."/>
            <person name="Hou S."/>
            <person name="Layman D."/>
            <person name="Leonard S."/>
            <person name="Nguyen C."/>
            <person name="Scott K."/>
            <person name="Holmes A."/>
            <person name="Grewal N."/>
            <person name="Mulvaney E."/>
            <person name="Ryan E."/>
            <person name="Sun H."/>
            <person name="Florea L."/>
            <person name="Miller W."/>
            <person name="Stoneking T."/>
            <person name="Nhan M."/>
            <person name="Waterston R."/>
            <person name="Wilson R.K."/>
        </authorList>
    </citation>
    <scope>NUCLEOTIDE SEQUENCE [LARGE SCALE GENOMIC DNA]</scope>
    <source>
        <strain>LT2 / SGSC1412 / ATCC 700720</strain>
    </source>
</reference>
<dbReference type="EMBL" id="AE006468">
    <property type="protein sequence ID" value="AAL20136.1"/>
    <property type="molecule type" value="Genomic_DNA"/>
</dbReference>
<dbReference type="RefSeq" id="WP_000164359.1">
    <property type="nucleotide sequence ID" value="NC_003197.2"/>
</dbReference>
<dbReference type="PDB" id="4Q6L">
    <property type="method" value="X-ray"/>
    <property type="resolution" value="2.20 A"/>
    <property type="chains" value="A=77-212"/>
</dbReference>
<dbReference type="PDB" id="4Q6V">
    <property type="method" value="X-ray"/>
    <property type="resolution" value="1.97 A"/>
    <property type="chains" value="A=77-212"/>
</dbReference>
<dbReference type="PDBsum" id="4Q6L"/>
<dbReference type="PDBsum" id="4Q6V"/>
<dbReference type="SMR" id="Q8ZQ08"/>
<dbReference type="STRING" id="99287.STM1207"/>
<dbReference type="PaxDb" id="99287-STM1207"/>
<dbReference type="KEGG" id="stm:STM1207"/>
<dbReference type="PATRIC" id="fig|99287.12.peg.1276"/>
<dbReference type="HOGENOM" id="CLU_092328_0_0_6"/>
<dbReference type="OMA" id="AMQPMVG"/>
<dbReference type="PhylomeDB" id="Q8ZQ08"/>
<dbReference type="BioCyc" id="SENT99287:STM1207-MONOMER"/>
<dbReference type="EvolutionaryTrace" id="Q8ZQ08"/>
<dbReference type="Proteomes" id="UP000001014">
    <property type="component" value="Chromosome"/>
</dbReference>
<dbReference type="GO" id="GO:0031241">
    <property type="term" value="C:periplasmic side of cell outer membrane"/>
    <property type="evidence" value="ECO:0000318"/>
    <property type="project" value="GO_Central"/>
</dbReference>
<dbReference type="GO" id="GO:0030234">
    <property type="term" value="F:enzyme regulator activity"/>
    <property type="evidence" value="ECO:0000318"/>
    <property type="project" value="GO_Central"/>
</dbReference>
<dbReference type="GO" id="GO:0009252">
    <property type="term" value="P:peptidoglycan biosynthetic process"/>
    <property type="evidence" value="ECO:0000318"/>
    <property type="project" value="GO_Central"/>
</dbReference>
<dbReference type="GO" id="GO:0008360">
    <property type="term" value="P:regulation of cell shape"/>
    <property type="evidence" value="ECO:0007669"/>
    <property type="project" value="UniProtKB-KW"/>
</dbReference>
<dbReference type="FunFam" id="3.40.50.10610:FF:000002">
    <property type="entry name" value="Penicillin-binding protein activator LpoB"/>
    <property type="match status" value="1"/>
</dbReference>
<dbReference type="Gene3D" id="3.40.50.10610">
    <property type="entry name" value="ABC-type transport auxiliary lipoprotein component"/>
    <property type="match status" value="1"/>
</dbReference>
<dbReference type="HAMAP" id="MF_01889">
    <property type="entry name" value="LpoB"/>
    <property type="match status" value="1"/>
</dbReference>
<dbReference type="InterPro" id="IPR014094">
    <property type="entry name" value="LpoB"/>
</dbReference>
<dbReference type="NCBIfam" id="TIGR02722">
    <property type="entry name" value="lp"/>
    <property type="match status" value="1"/>
</dbReference>
<dbReference type="PANTHER" id="PTHR40593">
    <property type="entry name" value="PENICILLIN-BINDING PROTEIN ACTIVATOR LPOB"/>
    <property type="match status" value="1"/>
</dbReference>
<dbReference type="PANTHER" id="PTHR40593:SF1">
    <property type="entry name" value="PENICILLIN-BINDING PROTEIN ACTIVATOR LPOB"/>
    <property type="match status" value="1"/>
</dbReference>
<dbReference type="Pfam" id="PF13036">
    <property type="entry name" value="LpoB"/>
    <property type="match status" value="1"/>
</dbReference>
<dbReference type="PROSITE" id="PS51257">
    <property type="entry name" value="PROKAR_LIPOPROTEIN"/>
    <property type="match status" value="1"/>
</dbReference>
<protein>
    <recommendedName>
        <fullName evidence="1">Penicillin-binding protein activator LpoB</fullName>
        <shortName evidence="1">PBP activator LpoB</shortName>
    </recommendedName>
</protein>
<sequence length="212" mass="22524">MTKMHRYAAIAALAIFLSGCMAQRQPAPVEEVKPAPEQPAQPPQPPVVPSVPTIPQQPGPIEHEDQTGQPAPKVRHYDWNGAMQPLVSKMLQADGVTAGSVLLVDSVNNRTNGSLNANEATETLRNALANNGKFTLVSVQQLSMAKQQLGLSPQDSLGTRSKAIGIARNVGAQYVLYSSASGNVNAPALQMQLMLVQTGEIIWSGKGAVQQQ</sequence>